<keyword id="KW-0997">Cell inner membrane</keyword>
<keyword id="KW-1003">Cell membrane</keyword>
<keyword id="KW-0472">Membrane</keyword>
<keyword id="KW-0571">Peptide transport</keyword>
<keyword id="KW-0653">Protein transport</keyword>
<keyword id="KW-0812">Transmembrane</keyword>
<keyword id="KW-1133">Transmembrane helix</keyword>
<keyword id="KW-0813">Transport</keyword>
<proteinExistence type="inferred from homology"/>
<reference key="1">
    <citation type="journal article" date="2008" name="PLoS Genet.">
        <title>Complete genome sequence of the N2-fixing broad host range endophyte Klebsiella pneumoniae 342 and virulence predictions verified in mice.</title>
        <authorList>
            <person name="Fouts D.E."/>
            <person name="Tyler H.L."/>
            <person name="DeBoy R.T."/>
            <person name="Daugherty S."/>
            <person name="Ren Q."/>
            <person name="Badger J.H."/>
            <person name="Durkin A.S."/>
            <person name="Huot H."/>
            <person name="Shrivastava S."/>
            <person name="Kothari S."/>
            <person name="Dodson R.J."/>
            <person name="Mohamoud Y."/>
            <person name="Khouri H."/>
            <person name="Roesch L.F.W."/>
            <person name="Krogfelt K.A."/>
            <person name="Struve C."/>
            <person name="Triplett E.W."/>
            <person name="Methe B.A."/>
        </authorList>
    </citation>
    <scope>NUCLEOTIDE SEQUENCE [LARGE SCALE GENOMIC DNA]</scope>
    <source>
        <strain>342</strain>
    </source>
</reference>
<evidence type="ECO:0000255" key="1">
    <source>
        <dbReference type="HAMAP-Rule" id="MF_01880"/>
    </source>
</evidence>
<name>DTPD_KLEP3</name>
<accession>B5XZE5</accession>
<feature type="chain" id="PRO_0000395296" description="Dipeptide permease D">
    <location>
        <begin position="1"/>
        <end position="492"/>
    </location>
</feature>
<feature type="transmembrane region" description="Helical" evidence="1">
    <location>
        <begin position="14"/>
        <end position="34"/>
    </location>
</feature>
<feature type="transmembrane region" description="Helical" evidence="1">
    <location>
        <begin position="49"/>
        <end position="69"/>
    </location>
</feature>
<feature type="transmembrane region" description="Helical" evidence="1">
    <location>
        <begin position="91"/>
        <end position="111"/>
    </location>
</feature>
<feature type="transmembrane region" description="Helical" evidence="1">
    <location>
        <begin position="138"/>
        <end position="158"/>
    </location>
</feature>
<feature type="transmembrane region" description="Helical" evidence="1">
    <location>
        <begin position="167"/>
        <end position="187"/>
    </location>
</feature>
<feature type="transmembrane region" description="Helical" evidence="1">
    <location>
        <begin position="212"/>
        <end position="232"/>
    </location>
</feature>
<feature type="transmembrane region" description="Helical" evidence="1">
    <location>
        <begin position="236"/>
        <end position="256"/>
    </location>
</feature>
<feature type="transmembrane region" description="Helical" evidence="1">
    <location>
        <begin position="269"/>
        <end position="289"/>
    </location>
</feature>
<feature type="transmembrane region" description="Helical" evidence="1">
    <location>
        <begin position="312"/>
        <end position="332"/>
    </location>
</feature>
<feature type="transmembrane region" description="Helical" evidence="1">
    <location>
        <begin position="344"/>
        <end position="364"/>
    </location>
</feature>
<feature type="transmembrane region" description="Helical" evidence="1">
    <location>
        <begin position="379"/>
        <end position="399"/>
    </location>
</feature>
<feature type="transmembrane region" description="Helical" evidence="1">
    <location>
        <begin position="413"/>
        <end position="433"/>
    </location>
</feature>
<feature type="transmembrane region" description="Helical" evidence="1">
    <location>
        <begin position="458"/>
        <end position="478"/>
    </location>
</feature>
<dbReference type="EMBL" id="CP000964">
    <property type="protein sequence ID" value="ACI10327.1"/>
    <property type="molecule type" value="Genomic_DNA"/>
</dbReference>
<dbReference type="SMR" id="B5XZE5"/>
<dbReference type="KEGG" id="kpe:KPK_3851"/>
<dbReference type="HOGENOM" id="CLU_004790_0_0_6"/>
<dbReference type="Proteomes" id="UP000001734">
    <property type="component" value="Chromosome"/>
</dbReference>
<dbReference type="GO" id="GO:0005886">
    <property type="term" value="C:plasma membrane"/>
    <property type="evidence" value="ECO:0007669"/>
    <property type="project" value="UniProtKB-SubCell"/>
</dbReference>
<dbReference type="GO" id="GO:0071916">
    <property type="term" value="F:dipeptide transmembrane transporter activity"/>
    <property type="evidence" value="ECO:0007669"/>
    <property type="project" value="UniProtKB-UniRule"/>
</dbReference>
<dbReference type="GO" id="GO:0015333">
    <property type="term" value="F:peptide:proton symporter activity"/>
    <property type="evidence" value="ECO:0007669"/>
    <property type="project" value="UniProtKB-UniRule"/>
</dbReference>
<dbReference type="GO" id="GO:0015031">
    <property type="term" value="P:protein transport"/>
    <property type="evidence" value="ECO:0007669"/>
    <property type="project" value="UniProtKB-KW"/>
</dbReference>
<dbReference type="CDD" id="cd17346">
    <property type="entry name" value="MFS_DtpA_like"/>
    <property type="match status" value="1"/>
</dbReference>
<dbReference type="FunFam" id="1.20.1250.20:FF:000035">
    <property type="entry name" value="Dipeptide permease D"/>
    <property type="match status" value="1"/>
</dbReference>
<dbReference type="Gene3D" id="1.20.1250.20">
    <property type="entry name" value="MFS general substrate transporter like domains"/>
    <property type="match status" value="1"/>
</dbReference>
<dbReference type="HAMAP" id="MF_01880">
    <property type="entry name" value="PTR2_DtpD_subfam"/>
    <property type="match status" value="1"/>
</dbReference>
<dbReference type="InterPro" id="IPR023777">
    <property type="entry name" value="AA/pep_transptr_DtpD"/>
</dbReference>
<dbReference type="InterPro" id="IPR005279">
    <property type="entry name" value="Dipep/tripep_permease"/>
</dbReference>
<dbReference type="InterPro" id="IPR020846">
    <property type="entry name" value="MFS_dom"/>
</dbReference>
<dbReference type="InterPro" id="IPR036259">
    <property type="entry name" value="MFS_trans_sf"/>
</dbReference>
<dbReference type="InterPro" id="IPR050171">
    <property type="entry name" value="MFS_Transporters"/>
</dbReference>
<dbReference type="InterPro" id="IPR000109">
    <property type="entry name" value="POT_fam"/>
</dbReference>
<dbReference type="InterPro" id="IPR018456">
    <property type="entry name" value="PTR2_symporter_CS"/>
</dbReference>
<dbReference type="NCBIfam" id="NF012006">
    <property type="entry name" value="PRK15462.1"/>
    <property type="match status" value="1"/>
</dbReference>
<dbReference type="NCBIfam" id="TIGR00924">
    <property type="entry name" value="yjdL_sub1_fam"/>
    <property type="match status" value="1"/>
</dbReference>
<dbReference type="PANTHER" id="PTHR23517:SF15">
    <property type="entry name" value="PROTON-DEPENDENT OLIGOPEPTIDE FAMILY TRANSPORT PROTEIN"/>
    <property type="match status" value="1"/>
</dbReference>
<dbReference type="PANTHER" id="PTHR23517">
    <property type="entry name" value="RESISTANCE PROTEIN MDTM, PUTATIVE-RELATED-RELATED"/>
    <property type="match status" value="1"/>
</dbReference>
<dbReference type="Pfam" id="PF00854">
    <property type="entry name" value="PTR2"/>
    <property type="match status" value="1"/>
</dbReference>
<dbReference type="SUPFAM" id="SSF103473">
    <property type="entry name" value="MFS general substrate transporter"/>
    <property type="match status" value="2"/>
</dbReference>
<dbReference type="PROSITE" id="PS50850">
    <property type="entry name" value="MFS"/>
    <property type="match status" value="1"/>
</dbReference>
<dbReference type="PROSITE" id="PS01022">
    <property type="entry name" value="PTR2_1"/>
    <property type="match status" value="1"/>
</dbReference>
<dbReference type="PROSITE" id="PS01023">
    <property type="entry name" value="PTR2_2"/>
    <property type="match status" value="1"/>
</dbReference>
<sequence>MKTTSSQPRAIYYVVALQIWEYFSFYGMRALLILYLTNQLKYDDNHAYALFSAYCSLVYVTPILGGYLADKLLGNRMAVMLGALLMAIGHLVLGASETAPVFLYLSLAIIVCGYGLFKSNVSCLLGELYEPADPRRDGGFSLMYAAGNIGSIIAPIACGYVQEEYSWAMGFALAAIGMVAGLVIFLCGNRHFQHTAGVNRQALCARRFLLPNWGWLLVLLVTAPLLIAVLFWQEWSVYALIVATVIGLAVLARIYLRAETDKQRKDLRLIVVLTAFSLLFWAFAQQGGSSISLYIDRFVNRHIMSYEVPTAMFQSVNAFAVMLCGMVLAWLVKESVGGNRTVRIWGKFALGLGLMSAGFCILTLSARWSAAYGQSSMPLMVLGLAVMGFAELFIDPVAMSQITRIEIPGVTGVLTGIYMLLSGAIANYLAGVIADQTSQASFDAAGAVNYSIDAYIKVFSQITWGALACVGVVLVIWLYHSLKVRTRRLAVE</sequence>
<protein>
    <recommendedName>
        <fullName evidence="1">Dipeptide permease D</fullName>
    </recommendedName>
</protein>
<comment type="function">
    <text evidence="1">Probable proton-dependent permease that transports dipeptides.</text>
</comment>
<comment type="subcellular location">
    <subcellularLocation>
        <location evidence="1">Cell inner membrane</location>
        <topology evidence="1">Multi-pass membrane protein</topology>
    </subcellularLocation>
</comment>
<comment type="similarity">
    <text evidence="1">Belongs to the major facilitator superfamily. Proton-dependent oligopeptide transporter (POT/PTR) (TC 2.A.17) family. DtpD subfamily.</text>
</comment>
<gene>
    <name evidence="1" type="primary">dtpD</name>
    <name type="ordered locus">KPK_3851</name>
</gene>
<organism>
    <name type="scientific">Klebsiella pneumoniae (strain 342)</name>
    <dbReference type="NCBI Taxonomy" id="507522"/>
    <lineage>
        <taxon>Bacteria</taxon>
        <taxon>Pseudomonadati</taxon>
        <taxon>Pseudomonadota</taxon>
        <taxon>Gammaproteobacteria</taxon>
        <taxon>Enterobacterales</taxon>
        <taxon>Enterobacteriaceae</taxon>
        <taxon>Klebsiella/Raoultella group</taxon>
        <taxon>Klebsiella</taxon>
        <taxon>Klebsiella pneumoniae complex</taxon>
    </lineage>
</organism>